<comment type="subcellular location">
    <subcellularLocation>
        <location evidence="3">Membrane</location>
        <topology evidence="3">Single-pass membrane protein</topology>
    </subcellularLocation>
</comment>
<comment type="similarity">
    <text evidence="3">Belongs to the UPF0648 family.</text>
</comment>
<dbReference type="EMBL" id="CU329670">
    <property type="protein sequence ID" value="CAB16593.2"/>
    <property type="molecule type" value="Genomic_DNA"/>
</dbReference>
<dbReference type="PIR" id="T38755">
    <property type="entry name" value="T38755"/>
</dbReference>
<dbReference type="SMR" id="Q6LA55"/>
<dbReference type="FunCoup" id="Q6LA55">
    <property type="interactions" value="230"/>
</dbReference>
<dbReference type="STRING" id="284812.Q6LA55"/>
<dbReference type="iPTMnet" id="Q6LA55"/>
<dbReference type="PaxDb" id="4896-SPAC3H5.09c.1"/>
<dbReference type="EnsemblFungi" id="SPAC3H5.09c.1">
    <property type="protein sequence ID" value="SPAC3H5.09c.1:pep"/>
    <property type="gene ID" value="SPAC3H5.09c"/>
</dbReference>
<dbReference type="KEGG" id="spo:2543405"/>
<dbReference type="PomBase" id="SPAC3H5.09c"/>
<dbReference type="VEuPathDB" id="FungiDB:SPAC3H5.09c"/>
<dbReference type="eggNOG" id="KOG1910">
    <property type="taxonomic scope" value="Eukaryota"/>
</dbReference>
<dbReference type="HOGENOM" id="CLU_000592_0_0_1"/>
<dbReference type="InParanoid" id="Q6LA55"/>
<dbReference type="OMA" id="IQLKWNN"/>
<dbReference type="PRO" id="PR:Q6LA55"/>
<dbReference type="Proteomes" id="UP000002485">
    <property type="component" value="Chromosome I"/>
</dbReference>
<dbReference type="GO" id="GO:0032541">
    <property type="term" value="C:cortical endoplasmic reticulum"/>
    <property type="evidence" value="ECO:0000314"/>
    <property type="project" value="PomBase"/>
</dbReference>
<dbReference type="GO" id="GO:0140268">
    <property type="term" value="C:endoplasmic reticulum-plasma membrane contact site"/>
    <property type="evidence" value="ECO:0000314"/>
    <property type="project" value="PomBase"/>
</dbReference>
<dbReference type="GO" id="GO:0016328">
    <property type="term" value="C:lateral plasma membrane"/>
    <property type="evidence" value="ECO:0000314"/>
    <property type="project" value="PomBase"/>
</dbReference>
<dbReference type="GO" id="GO:0035091">
    <property type="term" value="F:phosphatidylinositol binding"/>
    <property type="evidence" value="ECO:0000304"/>
    <property type="project" value="PomBase"/>
</dbReference>
<dbReference type="GO" id="GO:0043495">
    <property type="term" value="F:protein-membrane adaptor activity"/>
    <property type="evidence" value="ECO:0000304"/>
    <property type="project" value="PomBase"/>
</dbReference>
<dbReference type="GO" id="GO:0061817">
    <property type="term" value="P:endoplasmic reticulum-plasma membrane tethering"/>
    <property type="evidence" value="ECO:0000304"/>
    <property type="project" value="PomBase"/>
</dbReference>
<dbReference type="InterPro" id="IPR019441">
    <property type="entry name" value="FMP27/BLTP2/Hobbit_GFWDK_RBG"/>
</dbReference>
<dbReference type="InterPro" id="IPR019415">
    <property type="entry name" value="FMP27_SW_RBG"/>
</dbReference>
<dbReference type="InterPro" id="IPR019449">
    <property type="entry name" value="FMP27_WPPW_RBG"/>
</dbReference>
<dbReference type="InterPro" id="IPR045167">
    <property type="entry name" value="Hobbit"/>
</dbReference>
<dbReference type="PANTHER" id="PTHR15678">
    <property type="entry name" value="ANTIGEN MLAA-22-RELATED"/>
    <property type="match status" value="1"/>
</dbReference>
<dbReference type="PANTHER" id="PTHR15678:SF6">
    <property type="entry name" value="BRIDGE-LIKE LIPID TRANSFER PROTEIN FAMILY MEMBER 2"/>
    <property type="match status" value="1"/>
</dbReference>
<dbReference type="Pfam" id="PF10344">
    <property type="entry name" value="Hobbit"/>
    <property type="match status" value="1"/>
</dbReference>
<dbReference type="SMART" id="SM01214">
    <property type="entry name" value="Fmp27_GFWDK"/>
    <property type="match status" value="1"/>
</dbReference>
<dbReference type="SMART" id="SM01215">
    <property type="entry name" value="Fmp27_SW"/>
    <property type="match status" value="1"/>
</dbReference>
<dbReference type="SMART" id="SM01216">
    <property type="entry name" value="Fmp27_WPPW"/>
    <property type="match status" value="1"/>
</dbReference>
<organism>
    <name type="scientific">Schizosaccharomyces pombe (strain 972 / ATCC 24843)</name>
    <name type="common">Fission yeast</name>
    <dbReference type="NCBI Taxonomy" id="284812"/>
    <lineage>
        <taxon>Eukaryota</taxon>
        <taxon>Fungi</taxon>
        <taxon>Dikarya</taxon>
        <taxon>Ascomycota</taxon>
        <taxon>Taphrinomycotina</taxon>
        <taxon>Schizosaccharomycetes</taxon>
        <taxon>Schizosaccharomycetales</taxon>
        <taxon>Schizosaccharomycetaceae</taxon>
        <taxon>Schizosaccharomyces</taxon>
    </lineage>
</organism>
<name>YF49_SCHPO</name>
<proteinExistence type="inferred from homology"/>
<accession>Q6LA55</accession>
<sequence length="2699" mass="311842">MNPLFPFSLLNPSTMWSSSQNTSFVWVVIATGFLFHLVLFVLSYVLGWPFTNFGFFSVYGLRHTFRNGDSVFISYVALRLHRPSTSKPYLLRIVTKGLIYTPSLSSANDAQSAGKNENQRSRLVFKAKREEEKTEEKFCHAVYMSNLLRNVEQKWIQFLHKSWMKWLHISIQESQLTFPSVGTFELGSLSMEMRPETNNVVGYENPSDPELVSSCVICSIRLANLVYIDRRQSSQQITDYLDLSLQTYYSLDKSNVPDTILRLRSSIKVGVLYIDLDTPLFEHLLNSNSSGGNHSSSSSSSGKVHVMKDNVEAALLKLQEAQIQIGTLKLWKRNVTGCGATYILNGSDFGLNLILLNKKNPSHRMFFPVEACVHQILASALSFNVESITPGHSPHVLLNIPLVTITCLTSALAEYARDASDLHQLQNSILRVNSTLTSPSLDLRLELLHDVLSCFPKKHDSTSRKKPKFPYQYFPYMKFSVSLYEPALRFLIASKSDSDFPGMLVANLSSMFLDIKYSPSSEHIFEIESSLRLSSNKVFYHNPKNKKWLINTSDLITFSLGYICNNDHGSLNMFFRDFQIRIEEEEVINSLKKFIILTKIKSEQVGPRKPRTKLVEPLLFRIPKWLKHIQLEVHSLLLVITAIRPEISPEPRGINCSIDKIHSLYLNDKKSRSQGMRKFDLNLELLMIKSIIFKNGKSLNSHLFLQIPNINFIVSTILRDNTAISRFTTEINFLRCFASLLHNCCIFYAYRACSSLFGENKSHKRIEKTNTSPQEPGVVPEGWNFDFRLKNARVSIFLDDDVSLLLDCGGFTTLKKTEKKYAEMHAKFIQIHTKNSDVPTLWDRFLALGNVRYQLKDLSDLEKLHQVTCSYISIRIPHKFIPFILIESAINTVKAAIRVSAEPLTIDQQHDLAEEIKQPRVVPHIQIKSTKFKFEVDDDPFECRLGMNYRIGLTEQQMRIDRWNIFEERANLLRKAKDPSPKSASESSSFYQNGSDIDDNDSNSSNTSNHTTENANAQQRKLEDLNRSFEDFLGSRPTNNSSFLKNVSVDEDTAREKLMEYDSLSWISNIKRIREFRYHRLRIRRMTAWPESDALDKHILFKENIIPIPIRPPLVDISLLNFDFTLDKPSFPLEELPKFLNTVGRGQPLDYGYSIYFPMYIDWKMDEAKFLIRDYPLPLVYIPKLGRGQDKRISSWHLKSNMVITEQQATLAAIRDVSVKVIPADLTKEGIPYVVNVTRTVSPIKTFSKTEIDVNSSLPTFLLWCNSYQPALSDMTRIMDTFTKMPIDPSEKLGFWDKIRLVAHSQIRLRWLEDGDVFLSLKGSRDPYVILGEGAGFQFCWSGNVSWDIGCDENPANFMIVDSDKFYLTIPDFPRQINGILEGKPLPTKSTKRSYTTFGVLKDLRCRKVIAKLVGKVRWRAGFVPERHCDEDCTVCNRKKACRLWNFKPHWQVITRIPQYCHDTHYGVYDAYRDFRSHYIHCSLALESPRYLDDANAFENVNSYNTIHLTPLVFSHFSSWWNLFSNNMSYPLRSGNLFPTLDSSPNKKFGRHLATFKYALELTPLFISHMYNYKTNKNWQDRTASATGLKARVDNFTIDLHQRSEKHEVKNKANLGRKHQEATSMKVHLAEIDFKTIDLRAISASFDEGALDNSDSIPANVLDEEEKECFSFKNVDGPANWVDIDDYHEADWLLPQQNEKCSIYPLAFSPRFTYYRHTKCHRRNEKNEKEIIPDTCRFGDEFTHRCLMPSRENPKAVQYELLQKRRKELEEFMSSEQERIGFLKSQLESNNDSEEVRQEYEELTKRIVTLSDHYRLLEYLLKDESSCSQASQCSENGQVDLSYASLSESVHAFNNRFVAHNVQVKWNNFIRNAVMSYVHEVERVRGFAYYMSQKAIVFLRDLEKRTESANDDFFGNYTEDDEDRENARHLLKFLLEDSKKRFWVKTSDADREHGSEEGNTNSISNNEYDIIQSYVFRFISPQIQLQCSSNPEKAVIISIQSLQIKILSVVDPIFPDNDINYLIERRFLCKVNESQFFISKKSDFEVVNASSLVLNEYGCEHNTVWPPWVPFETTFDFVLTPAAFSRFLHRVSFSVIYTKHNDLRLQETVHSTRAFFEDLDTHADTLTFDFPRVVFSTDSSQYYDIFTIITDLLLYKEPAQKQRNQRLEEIMLAADFSDLTGTSEVVRALQARVHRLLDLKLQHQLYDVTFGIYAHIAQQLFLQNELHRCGEELYYLIESIAAVQNRGIHQNKVRSNLSWFLMAKEVVWHLLEDNKKPFLDVRLQNATFRRIENSDASNFNTLEIEFMKGSNLAPGCQFENIICPYFNHEFSNEQLLQQKFIRIHWEVLEAVAGIQVIQHFEINLFPLSLQIEQELATKLFAYAFPNRNESDGFPHIYSRNHDKRKENGSQGEADNSNYSGSLMRRRTNDQEEDALATPSSSRRDSRSKRASLIDFTIDKCLDVDDEGRMELQSMLDRAGSNMLITYFKIPSVVLRLSYRGTGGLGLENITGFVFTVPTMEYRNEVCSYLDLAMKLKHDLIRTVVSHTGKLLVEKVKGNYHLKEHEREVSSELLNLQQLSAEHNRHADLESMVMARDDYINVQQPLAEENQEEGSPASAISRNHSTRSSLNSPRQFWAYHGSRSKKIADIVKRHIPPTINGKRSKNKGNEGSNARVDFYNDERYDPVKRELILGASNRRK</sequence>
<protein>
    <recommendedName>
        <fullName>UPF0648 protein C3H5.09c</fullName>
    </recommendedName>
</protein>
<evidence type="ECO:0000255" key="1"/>
<evidence type="ECO:0000256" key="2">
    <source>
        <dbReference type="SAM" id="MobiDB-lite"/>
    </source>
</evidence>
<evidence type="ECO:0000305" key="3"/>
<gene>
    <name type="ORF">SPAC3H5.09c</name>
</gene>
<feature type="chain" id="PRO_0000350759" description="UPF0648 protein C3H5.09c">
    <location>
        <begin position="1"/>
        <end position="2699"/>
    </location>
</feature>
<feature type="transmembrane region" description="Helical" evidence="1">
    <location>
        <begin position="24"/>
        <end position="44"/>
    </location>
</feature>
<feature type="region of interest" description="Disordered" evidence="2">
    <location>
        <begin position="975"/>
        <end position="1021"/>
    </location>
</feature>
<feature type="region of interest" description="Disordered" evidence="2">
    <location>
        <begin position="2393"/>
        <end position="2447"/>
    </location>
</feature>
<feature type="region of interest" description="Disordered" evidence="2">
    <location>
        <begin position="2606"/>
        <end position="2632"/>
    </location>
</feature>
<feature type="region of interest" description="Disordered" evidence="2">
    <location>
        <begin position="2647"/>
        <end position="2676"/>
    </location>
</feature>
<feature type="coiled-coil region" evidence="1">
    <location>
        <begin position="1006"/>
        <end position="1033"/>
    </location>
</feature>
<feature type="coiled-coil region" evidence="1">
    <location>
        <begin position="1758"/>
        <end position="1818"/>
    </location>
</feature>
<feature type="compositionally biased region" description="Low complexity" evidence="2">
    <location>
        <begin position="981"/>
        <end position="995"/>
    </location>
</feature>
<feature type="compositionally biased region" description="Polar residues" evidence="2">
    <location>
        <begin position="1010"/>
        <end position="1019"/>
    </location>
</feature>
<feature type="compositionally biased region" description="Polar residues" evidence="2">
    <location>
        <begin position="2408"/>
        <end position="2420"/>
    </location>
</feature>
<feature type="compositionally biased region" description="Polar residues" evidence="2">
    <location>
        <begin position="2617"/>
        <end position="2632"/>
    </location>
</feature>
<feature type="glycosylation site" description="N-linked (GlcNAc...) asparagine" evidence="1">
    <location>
        <position position="21"/>
    </location>
</feature>
<feature type="glycosylation site" description="N-linked (GlcNAc...) asparagine" evidence="1">
    <location>
        <position position="288"/>
    </location>
</feature>
<feature type="glycosylation site" description="N-linked (GlcNAc...) asparagine" evidence="1">
    <location>
        <position position="293"/>
    </location>
</feature>
<feature type="glycosylation site" description="N-linked (GlcNAc...) asparagine" evidence="1">
    <location>
        <position position="334"/>
    </location>
</feature>
<feature type="glycosylation site" description="N-linked (GlcNAc...) asparagine" evidence="1">
    <location>
        <position position="345"/>
    </location>
</feature>
<feature type="glycosylation site" description="N-linked (GlcNAc...) asparagine" evidence="1">
    <location>
        <position position="433"/>
    </location>
</feature>
<feature type="glycosylation site" description="N-linked (GlcNAc...) asparagine" evidence="1">
    <location>
        <position position="507"/>
    </location>
</feature>
<feature type="glycosylation site" description="N-linked (GlcNAc...) asparagine" evidence="1">
    <location>
        <position position="551"/>
    </location>
</feature>
<feature type="glycosylation site" description="N-linked (GlcNAc...) asparagine" evidence="1">
    <location>
        <position position="655"/>
    </location>
</feature>
<feature type="glycosylation site" description="N-linked (GlcNAc...) asparagine" evidence="1">
    <location>
        <position position="760"/>
    </location>
</feature>
<feature type="glycosylation site" description="N-linked (GlcNAc...) asparagine" evidence="1">
    <location>
        <position position="993"/>
    </location>
</feature>
<feature type="glycosylation site" description="N-linked (GlcNAc...) asparagine" evidence="1">
    <location>
        <position position="1000"/>
    </location>
</feature>
<feature type="glycosylation site" description="N-linked (GlcNAc...) asparagine" evidence="1">
    <location>
        <position position="1003"/>
    </location>
</feature>
<feature type="glycosylation site" description="N-linked (GlcNAc...) asparagine" evidence="1">
    <location>
        <position position="1006"/>
    </location>
</feature>
<feature type="glycosylation site" description="N-linked (GlcNAc...) asparagine" evidence="1">
    <location>
        <position position="1009"/>
    </location>
</feature>
<feature type="glycosylation site" description="N-linked (GlcNAc...) asparagine" evidence="1">
    <location>
        <position position="1026"/>
    </location>
</feature>
<feature type="glycosylation site" description="N-linked (GlcNAc...) asparagine" evidence="1">
    <location>
        <position position="1039"/>
    </location>
</feature>
<feature type="glycosylation site" description="N-linked (GlcNAc...) asparagine" evidence="1">
    <location>
        <position position="1046"/>
    </location>
</feature>
<feature type="glycosylation site" description="N-linked (GlcNAc...) asparagine" evidence="1">
    <location>
        <position position="1236"/>
    </location>
</feature>
<feature type="glycosylation site" description="N-linked (GlcNAc...) asparagine" evidence="1">
    <location>
        <position position="1255"/>
    </location>
</feature>
<feature type="glycosylation site" description="N-linked (GlcNAc...) asparagine" evidence="1">
    <location>
        <position position="1344"/>
    </location>
</feature>
<feature type="glycosylation site" description="N-linked (GlcNAc...) asparagine" evidence="1">
    <location>
        <position position="1527"/>
    </location>
</feature>
<feature type="glycosylation site" description="N-linked (GlcNAc...) asparagine" evidence="1">
    <location>
        <position position="1595"/>
    </location>
</feature>
<feature type="glycosylation site" description="N-linked (GlcNAc...) asparagine" evidence="1">
    <location>
        <position position="1791"/>
    </location>
</feature>
<feature type="glycosylation site" description="N-linked (GlcNAc...) asparagine" evidence="1">
    <location>
        <position position="1916"/>
    </location>
</feature>
<feature type="glycosylation site" description="N-linked (GlcNAc...) asparagine" evidence="1">
    <location>
        <position position="2032"/>
    </location>
</feature>
<feature type="glycosylation site" description="N-linked (GlcNAc...) asparagine" evidence="1">
    <location>
        <position position="2048"/>
    </location>
</feature>
<feature type="glycosylation site" description="N-linked (GlcNAc...) asparagine" evidence="1">
    <location>
        <position position="2256"/>
    </location>
</feature>
<feature type="glycosylation site" description="N-linked (GlcNAc...) asparagine" evidence="1">
    <location>
        <position position="2285"/>
    </location>
</feature>
<feature type="glycosylation site" description="N-linked (GlcNAc...) asparagine" evidence="1">
    <location>
        <position position="2388"/>
    </location>
</feature>
<feature type="glycosylation site" description="N-linked (GlcNAc...) asparagine" evidence="1">
    <location>
        <position position="2407"/>
    </location>
</feature>
<feature type="glycosylation site" description="N-linked (GlcNAc...) asparagine" evidence="1">
    <location>
        <position position="2417"/>
    </location>
</feature>
<feature type="glycosylation site" description="N-linked (GlcNAc...) asparagine" evidence="1">
    <location>
        <position position="2508"/>
    </location>
</feature>
<feature type="glycosylation site" description="N-linked (GlcNAc...) asparagine" evidence="1">
    <location>
        <position position="2622"/>
    </location>
</feature>
<keyword id="KW-0175">Coiled coil</keyword>
<keyword id="KW-0325">Glycoprotein</keyword>
<keyword id="KW-0472">Membrane</keyword>
<keyword id="KW-1185">Reference proteome</keyword>
<keyword id="KW-0812">Transmembrane</keyword>
<keyword id="KW-1133">Transmembrane helix</keyword>
<reference key="1">
    <citation type="journal article" date="2002" name="Nature">
        <title>The genome sequence of Schizosaccharomyces pombe.</title>
        <authorList>
            <person name="Wood V."/>
            <person name="Gwilliam R."/>
            <person name="Rajandream M.A."/>
            <person name="Lyne M.H."/>
            <person name="Lyne R."/>
            <person name="Stewart A."/>
            <person name="Sgouros J.G."/>
            <person name="Peat N."/>
            <person name="Hayles J."/>
            <person name="Baker S.G."/>
            <person name="Basham D."/>
            <person name="Bowman S."/>
            <person name="Brooks K."/>
            <person name="Brown D."/>
            <person name="Brown S."/>
            <person name="Chillingworth T."/>
            <person name="Churcher C.M."/>
            <person name="Collins M."/>
            <person name="Connor R."/>
            <person name="Cronin A."/>
            <person name="Davis P."/>
            <person name="Feltwell T."/>
            <person name="Fraser A."/>
            <person name="Gentles S."/>
            <person name="Goble A."/>
            <person name="Hamlin N."/>
            <person name="Harris D.E."/>
            <person name="Hidalgo J."/>
            <person name="Hodgson G."/>
            <person name="Holroyd S."/>
            <person name="Hornsby T."/>
            <person name="Howarth S."/>
            <person name="Huckle E.J."/>
            <person name="Hunt S."/>
            <person name="Jagels K."/>
            <person name="James K.D."/>
            <person name="Jones L."/>
            <person name="Jones M."/>
            <person name="Leather S."/>
            <person name="McDonald S."/>
            <person name="McLean J."/>
            <person name="Mooney P."/>
            <person name="Moule S."/>
            <person name="Mungall K.L."/>
            <person name="Murphy L.D."/>
            <person name="Niblett D."/>
            <person name="Odell C."/>
            <person name="Oliver K."/>
            <person name="O'Neil S."/>
            <person name="Pearson D."/>
            <person name="Quail M.A."/>
            <person name="Rabbinowitsch E."/>
            <person name="Rutherford K.M."/>
            <person name="Rutter S."/>
            <person name="Saunders D."/>
            <person name="Seeger K."/>
            <person name="Sharp S."/>
            <person name="Skelton J."/>
            <person name="Simmonds M.N."/>
            <person name="Squares R."/>
            <person name="Squares S."/>
            <person name="Stevens K."/>
            <person name="Taylor K."/>
            <person name="Taylor R.G."/>
            <person name="Tivey A."/>
            <person name="Walsh S.V."/>
            <person name="Warren T."/>
            <person name="Whitehead S."/>
            <person name="Woodward J.R."/>
            <person name="Volckaert G."/>
            <person name="Aert R."/>
            <person name="Robben J."/>
            <person name="Grymonprez B."/>
            <person name="Weltjens I."/>
            <person name="Vanstreels E."/>
            <person name="Rieger M."/>
            <person name="Schaefer M."/>
            <person name="Mueller-Auer S."/>
            <person name="Gabel C."/>
            <person name="Fuchs M."/>
            <person name="Duesterhoeft A."/>
            <person name="Fritzc C."/>
            <person name="Holzer E."/>
            <person name="Moestl D."/>
            <person name="Hilbert H."/>
            <person name="Borzym K."/>
            <person name="Langer I."/>
            <person name="Beck A."/>
            <person name="Lehrach H."/>
            <person name="Reinhardt R."/>
            <person name="Pohl T.M."/>
            <person name="Eger P."/>
            <person name="Zimmermann W."/>
            <person name="Wedler H."/>
            <person name="Wambutt R."/>
            <person name="Purnelle B."/>
            <person name="Goffeau A."/>
            <person name="Cadieu E."/>
            <person name="Dreano S."/>
            <person name="Gloux S."/>
            <person name="Lelaure V."/>
            <person name="Mottier S."/>
            <person name="Galibert F."/>
            <person name="Aves S.J."/>
            <person name="Xiang Z."/>
            <person name="Hunt C."/>
            <person name="Moore K."/>
            <person name="Hurst S.M."/>
            <person name="Lucas M."/>
            <person name="Rochet M."/>
            <person name="Gaillardin C."/>
            <person name="Tallada V.A."/>
            <person name="Garzon A."/>
            <person name="Thode G."/>
            <person name="Daga R.R."/>
            <person name="Cruzado L."/>
            <person name="Jimenez J."/>
            <person name="Sanchez M."/>
            <person name="del Rey F."/>
            <person name="Benito J."/>
            <person name="Dominguez A."/>
            <person name="Revuelta J.L."/>
            <person name="Moreno S."/>
            <person name="Armstrong J."/>
            <person name="Forsburg S.L."/>
            <person name="Cerutti L."/>
            <person name="Lowe T."/>
            <person name="McCombie W.R."/>
            <person name="Paulsen I."/>
            <person name="Potashkin J."/>
            <person name="Shpakovski G.V."/>
            <person name="Ussery D."/>
            <person name="Barrell B.G."/>
            <person name="Nurse P."/>
        </authorList>
    </citation>
    <scope>NUCLEOTIDE SEQUENCE [LARGE SCALE GENOMIC DNA]</scope>
    <source>
        <strain>972 / ATCC 24843</strain>
    </source>
</reference>
<reference key="2">
    <citation type="journal article" date="2011" name="Science">
        <title>Comparative functional genomics of the fission yeasts.</title>
        <authorList>
            <person name="Rhind N."/>
            <person name="Chen Z."/>
            <person name="Yassour M."/>
            <person name="Thompson D.A."/>
            <person name="Haas B.J."/>
            <person name="Habib N."/>
            <person name="Wapinski I."/>
            <person name="Roy S."/>
            <person name="Lin M.F."/>
            <person name="Heiman D.I."/>
            <person name="Young S.K."/>
            <person name="Furuya K."/>
            <person name="Guo Y."/>
            <person name="Pidoux A."/>
            <person name="Chen H.M."/>
            <person name="Robbertse B."/>
            <person name="Goldberg J.M."/>
            <person name="Aoki K."/>
            <person name="Bayne E.H."/>
            <person name="Berlin A.M."/>
            <person name="Desjardins C.A."/>
            <person name="Dobbs E."/>
            <person name="Dukaj L."/>
            <person name="Fan L."/>
            <person name="FitzGerald M.G."/>
            <person name="French C."/>
            <person name="Gujja S."/>
            <person name="Hansen K."/>
            <person name="Keifenheim D."/>
            <person name="Levin J.Z."/>
            <person name="Mosher R.A."/>
            <person name="Mueller C.A."/>
            <person name="Pfiffner J."/>
            <person name="Priest M."/>
            <person name="Russ C."/>
            <person name="Smialowska A."/>
            <person name="Swoboda P."/>
            <person name="Sykes S.M."/>
            <person name="Vaughn M."/>
            <person name="Vengrova S."/>
            <person name="Yoder R."/>
            <person name="Zeng Q."/>
            <person name="Allshire R."/>
            <person name="Baulcombe D."/>
            <person name="Birren B.W."/>
            <person name="Brown W."/>
            <person name="Ekwall K."/>
            <person name="Kellis M."/>
            <person name="Leatherwood J."/>
            <person name="Levin H."/>
            <person name="Margalit H."/>
            <person name="Martienssen R."/>
            <person name="Nieduszynski C.A."/>
            <person name="Spatafora J.W."/>
            <person name="Friedman N."/>
            <person name="Dalgaard J.Z."/>
            <person name="Baumann P."/>
            <person name="Niki H."/>
            <person name="Regev A."/>
            <person name="Nusbaum C."/>
        </authorList>
    </citation>
    <scope>REVISION OF GENE MODEL</scope>
</reference>